<accession>Q605B8</accession>
<proteinExistence type="inferred from homology"/>
<feature type="chain" id="PRO_0000130146" description="Small ribosomal subunit protein uS3">
    <location>
        <begin position="1"/>
        <end position="223"/>
    </location>
</feature>
<feature type="domain" description="KH type-2" evidence="1">
    <location>
        <begin position="39"/>
        <end position="107"/>
    </location>
</feature>
<name>RS3_METCA</name>
<comment type="function">
    <text evidence="1">Binds the lower part of the 30S subunit head. Binds mRNA in the 70S ribosome, positioning it for translation.</text>
</comment>
<comment type="subunit">
    <text evidence="1">Part of the 30S ribosomal subunit. Forms a tight complex with proteins S10 and S14.</text>
</comment>
<comment type="similarity">
    <text evidence="1">Belongs to the universal ribosomal protein uS3 family.</text>
</comment>
<reference key="1">
    <citation type="journal article" date="2004" name="PLoS Biol.">
        <title>Genomic insights into methanotrophy: the complete genome sequence of Methylococcus capsulatus (Bath).</title>
        <authorList>
            <person name="Ward N.L."/>
            <person name="Larsen O."/>
            <person name="Sakwa J."/>
            <person name="Bruseth L."/>
            <person name="Khouri H.M."/>
            <person name="Durkin A.S."/>
            <person name="Dimitrov G."/>
            <person name="Jiang L."/>
            <person name="Scanlan D."/>
            <person name="Kang K.H."/>
            <person name="Lewis M.R."/>
            <person name="Nelson K.E."/>
            <person name="Methe B.A."/>
            <person name="Wu M."/>
            <person name="Heidelberg J.F."/>
            <person name="Paulsen I.T."/>
            <person name="Fouts D.E."/>
            <person name="Ravel J."/>
            <person name="Tettelin H."/>
            <person name="Ren Q."/>
            <person name="Read T.D."/>
            <person name="DeBoy R.T."/>
            <person name="Seshadri R."/>
            <person name="Salzberg S.L."/>
            <person name="Jensen H.B."/>
            <person name="Birkeland N.K."/>
            <person name="Nelson W.C."/>
            <person name="Dodson R.J."/>
            <person name="Grindhaug S.H."/>
            <person name="Holt I.E."/>
            <person name="Eidhammer I."/>
            <person name="Jonasen I."/>
            <person name="Vanaken S."/>
            <person name="Utterback T.R."/>
            <person name="Feldblyum T.V."/>
            <person name="Fraser C.M."/>
            <person name="Lillehaug J.R."/>
            <person name="Eisen J.A."/>
        </authorList>
    </citation>
    <scope>NUCLEOTIDE SEQUENCE [LARGE SCALE GENOMIC DNA]</scope>
    <source>
        <strain>ATCC 33009 / NCIMB 11132 / Bath</strain>
    </source>
</reference>
<evidence type="ECO:0000255" key="1">
    <source>
        <dbReference type="HAMAP-Rule" id="MF_01309"/>
    </source>
</evidence>
<evidence type="ECO:0000305" key="2"/>
<dbReference type="EMBL" id="AE017282">
    <property type="protein sequence ID" value="AAU91469.1"/>
    <property type="molecule type" value="Genomic_DNA"/>
</dbReference>
<dbReference type="RefSeq" id="WP_010961594.1">
    <property type="nucleotide sequence ID" value="NC_002977.6"/>
</dbReference>
<dbReference type="SMR" id="Q605B8"/>
<dbReference type="STRING" id="243233.MCA2366"/>
<dbReference type="GeneID" id="88224568"/>
<dbReference type="KEGG" id="mca:MCA2366"/>
<dbReference type="eggNOG" id="COG0092">
    <property type="taxonomic scope" value="Bacteria"/>
</dbReference>
<dbReference type="HOGENOM" id="CLU_058591_0_2_6"/>
<dbReference type="Proteomes" id="UP000006821">
    <property type="component" value="Chromosome"/>
</dbReference>
<dbReference type="GO" id="GO:0022627">
    <property type="term" value="C:cytosolic small ribosomal subunit"/>
    <property type="evidence" value="ECO:0007669"/>
    <property type="project" value="TreeGrafter"/>
</dbReference>
<dbReference type="GO" id="GO:0003729">
    <property type="term" value="F:mRNA binding"/>
    <property type="evidence" value="ECO:0007669"/>
    <property type="project" value="UniProtKB-UniRule"/>
</dbReference>
<dbReference type="GO" id="GO:0019843">
    <property type="term" value="F:rRNA binding"/>
    <property type="evidence" value="ECO:0007669"/>
    <property type="project" value="UniProtKB-UniRule"/>
</dbReference>
<dbReference type="GO" id="GO:0003735">
    <property type="term" value="F:structural constituent of ribosome"/>
    <property type="evidence" value="ECO:0007669"/>
    <property type="project" value="InterPro"/>
</dbReference>
<dbReference type="GO" id="GO:0006412">
    <property type="term" value="P:translation"/>
    <property type="evidence" value="ECO:0007669"/>
    <property type="project" value="UniProtKB-UniRule"/>
</dbReference>
<dbReference type="CDD" id="cd02412">
    <property type="entry name" value="KH-II_30S_S3"/>
    <property type="match status" value="1"/>
</dbReference>
<dbReference type="FunFam" id="3.30.1140.32:FF:000001">
    <property type="entry name" value="30S ribosomal protein S3"/>
    <property type="match status" value="1"/>
</dbReference>
<dbReference type="FunFam" id="3.30.300.20:FF:000001">
    <property type="entry name" value="30S ribosomal protein S3"/>
    <property type="match status" value="1"/>
</dbReference>
<dbReference type="Gene3D" id="3.30.300.20">
    <property type="match status" value="1"/>
</dbReference>
<dbReference type="Gene3D" id="3.30.1140.32">
    <property type="entry name" value="Ribosomal protein S3, C-terminal domain"/>
    <property type="match status" value="1"/>
</dbReference>
<dbReference type="HAMAP" id="MF_01309_B">
    <property type="entry name" value="Ribosomal_uS3_B"/>
    <property type="match status" value="1"/>
</dbReference>
<dbReference type="InterPro" id="IPR004087">
    <property type="entry name" value="KH_dom"/>
</dbReference>
<dbReference type="InterPro" id="IPR015946">
    <property type="entry name" value="KH_dom-like_a/b"/>
</dbReference>
<dbReference type="InterPro" id="IPR004044">
    <property type="entry name" value="KH_dom_type_2"/>
</dbReference>
<dbReference type="InterPro" id="IPR009019">
    <property type="entry name" value="KH_sf_prok-type"/>
</dbReference>
<dbReference type="InterPro" id="IPR036419">
    <property type="entry name" value="Ribosomal_S3_C_sf"/>
</dbReference>
<dbReference type="InterPro" id="IPR005704">
    <property type="entry name" value="Ribosomal_uS3_bac-typ"/>
</dbReference>
<dbReference type="InterPro" id="IPR001351">
    <property type="entry name" value="Ribosomal_uS3_C"/>
</dbReference>
<dbReference type="InterPro" id="IPR018280">
    <property type="entry name" value="Ribosomal_uS3_CS"/>
</dbReference>
<dbReference type="NCBIfam" id="TIGR01009">
    <property type="entry name" value="rpsC_bact"/>
    <property type="match status" value="1"/>
</dbReference>
<dbReference type="PANTHER" id="PTHR11760">
    <property type="entry name" value="30S/40S RIBOSOMAL PROTEIN S3"/>
    <property type="match status" value="1"/>
</dbReference>
<dbReference type="PANTHER" id="PTHR11760:SF19">
    <property type="entry name" value="SMALL RIBOSOMAL SUBUNIT PROTEIN US3C"/>
    <property type="match status" value="1"/>
</dbReference>
<dbReference type="Pfam" id="PF07650">
    <property type="entry name" value="KH_2"/>
    <property type="match status" value="1"/>
</dbReference>
<dbReference type="Pfam" id="PF00189">
    <property type="entry name" value="Ribosomal_S3_C"/>
    <property type="match status" value="1"/>
</dbReference>
<dbReference type="SMART" id="SM00322">
    <property type="entry name" value="KH"/>
    <property type="match status" value="1"/>
</dbReference>
<dbReference type="SUPFAM" id="SSF54814">
    <property type="entry name" value="Prokaryotic type KH domain (KH-domain type II)"/>
    <property type="match status" value="1"/>
</dbReference>
<dbReference type="SUPFAM" id="SSF54821">
    <property type="entry name" value="Ribosomal protein S3 C-terminal domain"/>
    <property type="match status" value="1"/>
</dbReference>
<dbReference type="PROSITE" id="PS50823">
    <property type="entry name" value="KH_TYPE_2"/>
    <property type="match status" value="1"/>
</dbReference>
<dbReference type="PROSITE" id="PS00548">
    <property type="entry name" value="RIBOSOMAL_S3"/>
    <property type="match status" value="1"/>
</dbReference>
<protein>
    <recommendedName>
        <fullName evidence="1">Small ribosomal subunit protein uS3</fullName>
    </recommendedName>
    <alternativeName>
        <fullName evidence="2">30S ribosomal protein S3</fullName>
    </alternativeName>
</protein>
<gene>
    <name evidence="1" type="primary">rpsC</name>
    <name type="ordered locus">MCA2366</name>
</gene>
<organism>
    <name type="scientific">Methylococcus capsulatus (strain ATCC 33009 / NCIMB 11132 / Bath)</name>
    <dbReference type="NCBI Taxonomy" id="243233"/>
    <lineage>
        <taxon>Bacteria</taxon>
        <taxon>Pseudomonadati</taxon>
        <taxon>Pseudomonadota</taxon>
        <taxon>Gammaproteobacteria</taxon>
        <taxon>Methylococcales</taxon>
        <taxon>Methylococcaceae</taxon>
        <taxon>Methylococcus</taxon>
    </lineage>
</organism>
<sequence>MGQKVNPTGIRLGYIKDWSSRWFADSKSYPVFLNNDLKVREFLKQKLKHASVSRIQINRLANNAQITIHTARPGIVIGKRGEDIDALRRDVSRFMGVPVQVSVEEIRKPELDAQLVAEGVAQQLEKRIMFRRAMKRAVQNTLRVGAEGIKISVAGRLNGAEIARTEWYREGRVPLHTFRADIDYGFAEAVTTYGVIGVKVWIFKGEVFEPVHTEPKTRSAVEA</sequence>
<keyword id="KW-1185">Reference proteome</keyword>
<keyword id="KW-0687">Ribonucleoprotein</keyword>
<keyword id="KW-0689">Ribosomal protein</keyword>
<keyword id="KW-0694">RNA-binding</keyword>
<keyword id="KW-0699">rRNA-binding</keyword>